<gene>
    <name evidence="1" type="primary">rps14</name>
</gene>
<organism>
    <name type="scientific">Staurastrum punctulatum</name>
    <name type="common">Green alga</name>
    <name type="synonym">Cosmoastrum punctulatum</name>
    <dbReference type="NCBI Taxonomy" id="102822"/>
    <lineage>
        <taxon>Eukaryota</taxon>
        <taxon>Viridiplantae</taxon>
        <taxon>Streptophyta</taxon>
        <taxon>Zygnematophyceae</taxon>
        <taxon>Zygnematophycidae</taxon>
        <taxon>Desmidiales</taxon>
        <taxon>Desmidiaceae</taxon>
        <taxon>Staurastrum</taxon>
    </lineage>
</organism>
<sequence length="100" mass="11712">MAKKSMIERDKKRKFLSAKYSIQRQQLKEQINQSLSLDEKAHLYRKLQSLPRNSAPTRITRRCFVTGRPKAVYRDFGLSRHVLREMAHACLLPGVIKASW</sequence>
<keyword id="KW-0150">Chloroplast</keyword>
<keyword id="KW-0934">Plastid</keyword>
<keyword id="KW-0687">Ribonucleoprotein</keyword>
<keyword id="KW-0689">Ribosomal protein</keyword>
<keyword id="KW-0694">RNA-binding</keyword>
<keyword id="KW-0699">rRNA-binding</keyword>
<proteinExistence type="inferred from homology"/>
<evidence type="ECO:0000255" key="1">
    <source>
        <dbReference type="HAMAP-Rule" id="MF_00537"/>
    </source>
</evidence>
<evidence type="ECO:0000305" key="2"/>
<reference key="1">
    <citation type="journal article" date="2005" name="BMC Biol.">
        <title>The complete chloroplast DNA sequences of the charophycean green algae Staurastrum and Zygnema reveal that the chloroplast genome underwent extensive changes during the evolution of the Zygnematales.</title>
        <authorList>
            <person name="Turmel M."/>
            <person name="Otis C."/>
            <person name="Lemieux C."/>
        </authorList>
    </citation>
    <scope>NUCLEOTIDE SEQUENCE [LARGE SCALE GENOMIC DNA]</scope>
</reference>
<name>RR14_STAPU</name>
<comment type="function">
    <text evidence="1">Binds 16S rRNA, required for the assembly of 30S particles.</text>
</comment>
<comment type="subunit">
    <text evidence="1">Part of the 30S ribosomal subunit.</text>
</comment>
<comment type="subcellular location">
    <subcellularLocation>
        <location>Plastid</location>
        <location>Chloroplast</location>
    </subcellularLocation>
</comment>
<comment type="similarity">
    <text evidence="1">Belongs to the universal ribosomal protein uS14 family.</text>
</comment>
<protein>
    <recommendedName>
        <fullName evidence="1">Small ribosomal subunit protein uS14c</fullName>
    </recommendedName>
    <alternativeName>
        <fullName evidence="2">30S ribosomal protein S14, chloroplastic</fullName>
    </alternativeName>
</protein>
<accession>Q32RS5</accession>
<dbReference type="EMBL" id="AY958085">
    <property type="protein sequence ID" value="AAX45752.1"/>
    <property type="molecule type" value="Genomic_DNA"/>
</dbReference>
<dbReference type="RefSeq" id="YP_636451.1">
    <property type="nucleotide sequence ID" value="NC_008116.1"/>
</dbReference>
<dbReference type="SMR" id="Q32RS5"/>
<dbReference type="GeneID" id="4108614"/>
<dbReference type="GO" id="GO:0009507">
    <property type="term" value="C:chloroplast"/>
    <property type="evidence" value="ECO:0007669"/>
    <property type="project" value="UniProtKB-SubCell"/>
</dbReference>
<dbReference type="GO" id="GO:0015935">
    <property type="term" value="C:small ribosomal subunit"/>
    <property type="evidence" value="ECO:0007669"/>
    <property type="project" value="TreeGrafter"/>
</dbReference>
<dbReference type="GO" id="GO:0019843">
    <property type="term" value="F:rRNA binding"/>
    <property type="evidence" value="ECO:0007669"/>
    <property type="project" value="UniProtKB-UniRule"/>
</dbReference>
<dbReference type="GO" id="GO:0003735">
    <property type="term" value="F:structural constituent of ribosome"/>
    <property type="evidence" value="ECO:0007669"/>
    <property type="project" value="InterPro"/>
</dbReference>
<dbReference type="GO" id="GO:0006412">
    <property type="term" value="P:translation"/>
    <property type="evidence" value="ECO:0007669"/>
    <property type="project" value="UniProtKB-UniRule"/>
</dbReference>
<dbReference type="FunFam" id="1.10.287.1480:FF:000001">
    <property type="entry name" value="30S ribosomal protein S14"/>
    <property type="match status" value="1"/>
</dbReference>
<dbReference type="Gene3D" id="1.10.287.1480">
    <property type="match status" value="1"/>
</dbReference>
<dbReference type="HAMAP" id="MF_00537">
    <property type="entry name" value="Ribosomal_uS14_1"/>
    <property type="match status" value="1"/>
</dbReference>
<dbReference type="InterPro" id="IPR001209">
    <property type="entry name" value="Ribosomal_uS14"/>
</dbReference>
<dbReference type="InterPro" id="IPR023036">
    <property type="entry name" value="Ribosomal_uS14_bac/plastid"/>
</dbReference>
<dbReference type="InterPro" id="IPR018271">
    <property type="entry name" value="Ribosomal_uS14_CS"/>
</dbReference>
<dbReference type="NCBIfam" id="NF006477">
    <property type="entry name" value="PRK08881.1"/>
    <property type="match status" value="1"/>
</dbReference>
<dbReference type="PANTHER" id="PTHR19836">
    <property type="entry name" value="30S RIBOSOMAL PROTEIN S14"/>
    <property type="match status" value="1"/>
</dbReference>
<dbReference type="PANTHER" id="PTHR19836:SF19">
    <property type="entry name" value="SMALL RIBOSOMAL SUBUNIT PROTEIN US14M"/>
    <property type="match status" value="1"/>
</dbReference>
<dbReference type="Pfam" id="PF00253">
    <property type="entry name" value="Ribosomal_S14"/>
    <property type="match status" value="1"/>
</dbReference>
<dbReference type="SUPFAM" id="SSF57716">
    <property type="entry name" value="Glucocorticoid receptor-like (DNA-binding domain)"/>
    <property type="match status" value="1"/>
</dbReference>
<dbReference type="PROSITE" id="PS00527">
    <property type="entry name" value="RIBOSOMAL_S14"/>
    <property type="match status" value="1"/>
</dbReference>
<geneLocation type="chloroplast"/>
<feature type="chain" id="PRO_0000276706" description="Small ribosomal subunit protein uS14c">
    <location>
        <begin position="1"/>
        <end position="100"/>
    </location>
</feature>